<dbReference type="EMBL" id="U29363">
    <property type="protein sequence ID" value="AAC43861.1"/>
    <property type="molecule type" value="Genomic_DNA"/>
</dbReference>
<dbReference type="EMBL" id="AL513382">
    <property type="protein sequence ID" value="CAD05997.1"/>
    <property type="molecule type" value="Genomic_DNA"/>
</dbReference>
<dbReference type="EMBL" id="AE014613">
    <property type="protein sequence ID" value="AAO70353.1"/>
    <property type="molecule type" value="Genomic_DNA"/>
</dbReference>
<dbReference type="RefSeq" id="NP_457284.1">
    <property type="nucleotide sequence ID" value="NC_003198.1"/>
</dbReference>
<dbReference type="RefSeq" id="WP_000526019.1">
    <property type="nucleotide sequence ID" value="NZ_WSUR01000005.1"/>
</dbReference>
<dbReference type="SMR" id="Q56023"/>
<dbReference type="STRING" id="220341.gene:17586907"/>
<dbReference type="KEGG" id="stt:t2792"/>
<dbReference type="KEGG" id="sty:STY3013"/>
<dbReference type="PATRIC" id="fig|220341.7.peg.3067"/>
<dbReference type="eggNOG" id="COG4790">
    <property type="taxonomic scope" value="Bacteria"/>
</dbReference>
<dbReference type="HOGENOM" id="CLU_042028_2_0_6"/>
<dbReference type="OMA" id="MPVCQRI"/>
<dbReference type="OrthoDB" id="9805111at2"/>
<dbReference type="PHI-base" id="PHI:642"/>
<dbReference type="Proteomes" id="UP000000541">
    <property type="component" value="Chromosome"/>
</dbReference>
<dbReference type="Proteomes" id="UP000002670">
    <property type="component" value="Chromosome"/>
</dbReference>
<dbReference type="GO" id="GO:0005886">
    <property type="term" value="C:plasma membrane"/>
    <property type="evidence" value="ECO:0007669"/>
    <property type="project" value="UniProtKB-SubCell"/>
</dbReference>
<dbReference type="GO" id="GO:0009306">
    <property type="term" value="P:protein secretion"/>
    <property type="evidence" value="ECO:0007669"/>
    <property type="project" value="InterPro"/>
</dbReference>
<dbReference type="InterPro" id="IPR005838">
    <property type="entry name" value="T3SS_IM_P"/>
</dbReference>
<dbReference type="InterPro" id="IPR005773">
    <property type="entry name" value="T3SS_YscR-like"/>
</dbReference>
<dbReference type="NCBIfam" id="NF009437">
    <property type="entry name" value="PRK12796.1"/>
    <property type="match status" value="1"/>
</dbReference>
<dbReference type="NCBIfam" id="NF009438">
    <property type="entry name" value="PRK12797.1"/>
    <property type="match status" value="1"/>
</dbReference>
<dbReference type="NCBIfam" id="TIGR01102">
    <property type="entry name" value="yscR"/>
    <property type="match status" value="1"/>
</dbReference>
<dbReference type="PANTHER" id="PTHR30587">
    <property type="entry name" value="FLAGELLAR BIOSYNTHETIC PROTEIN FLIP"/>
    <property type="match status" value="1"/>
</dbReference>
<dbReference type="PANTHER" id="PTHR30587:SF2">
    <property type="entry name" value="SURFACE PRESENTATION OF ANTIGENS PROTEIN SPAP"/>
    <property type="match status" value="1"/>
</dbReference>
<dbReference type="Pfam" id="PF00813">
    <property type="entry name" value="FliP"/>
    <property type="match status" value="1"/>
</dbReference>
<dbReference type="PRINTS" id="PR01302">
    <property type="entry name" value="TYPE3IMPPROT"/>
</dbReference>
<dbReference type="PROSITE" id="PS01060">
    <property type="entry name" value="FLIP_1"/>
    <property type="match status" value="1"/>
</dbReference>
<dbReference type="PROSITE" id="PS01061">
    <property type="entry name" value="FLIP_2"/>
    <property type="match status" value="1"/>
</dbReference>
<evidence type="ECO:0000255" key="1"/>
<evidence type="ECO:0000305" key="2"/>
<feature type="chain" id="PRO_0000191991" description="Surface presentation of antigens protein SpaP">
    <location>
        <begin position="1"/>
        <end position="224"/>
    </location>
</feature>
<feature type="transmembrane region" description="Helical" evidence="1">
    <location>
        <begin position="8"/>
        <end position="28"/>
    </location>
</feature>
<feature type="transmembrane region" description="Helical" evidence="1">
    <location>
        <begin position="55"/>
        <end position="75"/>
    </location>
</feature>
<feature type="transmembrane region" description="Helical" evidence="1">
    <location>
        <begin position="161"/>
        <end position="181"/>
    </location>
</feature>
<feature type="transmembrane region" description="Helical" evidence="1">
    <location>
        <begin position="185"/>
        <end position="205"/>
    </location>
</feature>
<protein>
    <recommendedName>
        <fullName>Surface presentation of antigens protein SpaP</fullName>
    </recommendedName>
</protein>
<reference key="1">
    <citation type="journal article" date="1995" name="Proc. Natl. Acad. Sci. U.S.A.">
        <title>Relationship between evolutionary rate and cellular location among the Inv/Spa invasion proteins of Salmonella enterica.</title>
        <authorList>
            <person name="Li J."/>
            <person name="Ochman H."/>
            <person name="Groisman E.A."/>
            <person name="Boyd E.F."/>
            <person name="Solomon F."/>
            <person name="Nelson K."/>
            <person name="Selander R.K."/>
        </authorList>
    </citation>
    <scope>NUCLEOTIDE SEQUENCE [GENOMIC DNA]</scope>
    <source>
        <strain>S3333</strain>
    </source>
</reference>
<reference key="2">
    <citation type="journal article" date="2001" name="Nature">
        <title>Complete genome sequence of a multiple drug resistant Salmonella enterica serovar Typhi CT18.</title>
        <authorList>
            <person name="Parkhill J."/>
            <person name="Dougan G."/>
            <person name="James K.D."/>
            <person name="Thomson N.R."/>
            <person name="Pickard D."/>
            <person name="Wain J."/>
            <person name="Churcher C.M."/>
            <person name="Mungall K.L."/>
            <person name="Bentley S.D."/>
            <person name="Holden M.T.G."/>
            <person name="Sebaihia M."/>
            <person name="Baker S."/>
            <person name="Basham D."/>
            <person name="Brooks K."/>
            <person name="Chillingworth T."/>
            <person name="Connerton P."/>
            <person name="Cronin A."/>
            <person name="Davis P."/>
            <person name="Davies R.M."/>
            <person name="Dowd L."/>
            <person name="White N."/>
            <person name="Farrar J."/>
            <person name="Feltwell T."/>
            <person name="Hamlin N."/>
            <person name="Haque A."/>
            <person name="Hien T.T."/>
            <person name="Holroyd S."/>
            <person name="Jagels K."/>
            <person name="Krogh A."/>
            <person name="Larsen T.S."/>
            <person name="Leather S."/>
            <person name="Moule S."/>
            <person name="O'Gaora P."/>
            <person name="Parry C."/>
            <person name="Quail M.A."/>
            <person name="Rutherford K.M."/>
            <person name="Simmonds M."/>
            <person name="Skelton J."/>
            <person name="Stevens K."/>
            <person name="Whitehead S."/>
            <person name="Barrell B.G."/>
        </authorList>
    </citation>
    <scope>NUCLEOTIDE SEQUENCE [LARGE SCALE GENOMIC DNA]</scope>
    <source>
        <strain>CT18</strain>
    </source>
</reference>
<reference key="3">
    <citation type="journal article" date="2003" name="J. Bacteriol.">
        <title>Comparative genomics of Salmonella enterica serovar Typhi strains Ty2 and CT18.</title>
        <authorList>
            <person name="Deng W."/>
            <person name="Liou S.-R."/>
            <person name="Plunkett G. III"/>
            <person name="Mayhew G.F."/>
            <person name="Rose D.J."/>
            <person name="Burland V."/>
            <person name="Kodoyianni V."/>
            <person name="Schwartz D.C."/>
            <person name="Blattner F.R."/>
        </authorList>
    </citation>
    <scope>NUCLEOTIDE SEQUENCE [LARGE SCALE GENOMIC DNA]</scope>
    <source>
        <strain>ATCC 700931 / Ty2</strain>
    </source>
</reference>
<sequence>MGNDISLIALLAFSTLLPFIIASGTCFVKFSIVFVMVRNALGLQQIPSNMTLNSVALLLSMFVMWPIMHDAYVYFEDEDVTFNDISSLSKHVDEGLDGYRDYLIKYSDRELVQFFENAQLKRQYGEETETVKRDKDEIEKPSIFALLPAYALSEIKSAFKIGFYLYLPFVVVDLVVSSVLLALGMMMMSPVTISTPIKLVLFVALDGWTLLSKGLILQYMDIAT</sequence>
<name>SPAP_SALTI</name>
<keyword id="KW-1003">Cell membrane</keyword>
<keyword id="KW-0472">Membrane</keyword>
<keyword id="KW-0812">Transmembrane</keyword>
<keyword id="KW-1133">Transmembrane helix</keyword>
<keyword id="KW-0843">Virulence</keyword>
<organism>
    <name type="scientific">Salmonella typhi</name>
    <dbReference type="NCBI Taxonomy" id="90370"/>
    <lineage>
        <taxon>Bacteria</taxon>
        <taxon>Pseudomonadati</taxon>
        <taxon>Pseudomonadota</taxon>
        <taxon>Gammaproteobacteria</taxon>
        <taxon>Enterobacterales</taxon>
        <taxon>Enterobacteriaceae</taxon>
        <taxon>Salmonella</taxon>
    </lineage>
</organism>
<proteinExistence type="inferred from homology"/>
<accession>Q56023</accession>
<comment type="function">
    <text>Involved in a secretory pathway responsible for the surface presentation of determinants needed for the entry of Salmonella species into mammalian cells.</text>
</comment>
<comment type="subcellular location">
    <subcellularLocation>
        <location evidence="2">Cell membrane</location>
        <topology evidence="2">Multi-pass membrane protein</topology>
    </subcellularLocation>
</comment>
<comment type="similarity">
    <text evidence="2">Belongs to the FliP/MopC/SpaP family.</text>
</comment>
<gene>
    <name type="primary">spaP</name>
    <name type="ordered locus">STY3013</name>
    <name type="ordered locus">t2792</name>
</gene>